<comment type="function">
    <text evidence="1">Catalyzes the oxidation of 3-carboxy-2-hydroxy-4-methylpentanoate (3-isopropylmalate) to 3-carboxy-4-methyl-2-oxopentanoate. The product decarboxylates to 4-methyl-2 oxopentanoate.</text>
</comment>
<comment type="catalytic activity">
    <reaction evidence="1">
        <text>(2R,3S)-3-isopropylmalate + NAD(+) = 4-methyl-2-oxopentanoate + CO2 + NADH</text>
        <dbReference type="Rhea" id="RHEA:32271"/>
        <dbReference type="ChEBI" id="CHEBI:16526"/>
        <dbReference type="ChEBI" id="CHEBI:17865"/>
        <dbReference type="ChEBI" id="CHEBI:35121"/>
        <dbReference type="ChEBI" id="CHEBI:57540"/>
        <dbReference type="ChEBI" id="CHEBI:57945"/>
        <dbReference type="EC" id="1.1.1.85"/>
    </reaction>
</comment>
<comment type="cofactor">
    <cofactor evidence="1">
        <name>Mg(2+)</name>
        <dbReference type="ChEBI" id="CHEBI:18420"/>
    </cofactor>
    <cofactor evidence="1">
        <name>Mn(2+)</name>
        <dbReference type="ChEBI" id="CHEBI:29035"/>
    </cofactor>
    <text evidence="1">Binds 1 Mg(2+) or Mn(2+) ion per subunit.</text>
</comment>
<comment type="pathway">
    <text evidence="1">Amino-acid biosynthesis; L-leucine biosynthesis; L-leucine from 3-methyl-2-oxobutanoate: step 3/4.</text>
</comment>
<comment type="subunit">
    <text evidence="1">Homodimer.</text>
</comment>
<comment type="subcellular location">
    <subcellularLocation>
        <location evidence="1">Cytoplasm</location>
    </subcellularLocation>
</comment>
<comment type="similarity">
    <text evidence="1">Belongs to the isocitrate and isopropylmalate dehydrogenases family. LeuB type 1 subfamily.</text>
</comment>
<name>LEU3_OCEIH</name>
<reference key="1">
    <citation type="journal article" date="2002" name="Nucleic Acids Res.">
        <title>Genome sequence of Oceanobacillus iheyensis isolated from the Iheya Ridge and its unexpected adaptive capabilities to extreme environments.</title>
        <authorList>
            <person name="Takami H."/>
            <person name="Takaki Y."/>
            <person name="Uchiyama I."/>
        </authorList>
    </citation>
    <scope>NUCLEOTIDE SEQUENCE [LARGE SCALE GENOMIC DNA]</scope>
    <source>
        <strain>DSM 14371 / CIP 107618 / JCM 11309 / KCTC 3954 / HTE831</strain>
    </source>
</reference>
<proteinExistence type="inferred from homology"/>
<protein>
    <recommendedName>
        <fullName evidence="1">3-isopropylmalate dehydrogenase</fullName>
        <ecNumber evidence="1">1.1.1.85</ecNumber>
    </recommendedName>
    <alternativeName>
        <fullName evidence="1">3-IPM-DH</fullName>
    </alternativeName>
    <alternativeName>
        <fullName evidence="1">Beta-IPM dehydrogenase</fullName>
        <shortName evidence="1">IMDH</shortName>
    </alternativeName>
</protein>
<accession>Q8EN68</accession>
<feature type="chain" id="PRO_0000083716" description="3-isopropylmalate dehydrogenase">
    <location>
        <begin position="1"/>
        <end position="366"/>
    </location>
</feature>
<feature type="binding site" evidence="1">
    <location>
        <begin position="76"/>
        <end position="89"/>
    </location>
    <ligand>
        <name>NAD(+)</name>
        <dbReference type="ChEBI" id="CHEBI:57540"/>
    </ligand>
</feature>
<feature type="binding site" evidence="1">
    <location>
        <position position="96"/>
    </location>
    <ligand>
        <name>substrate</name>
    </ligand>
</feature>
<feature type="binding site" evidence="1">
    <location>
        <position position="106"/>
    </location>
    <ligand>
        <name>substrate</name>
    </ligand>
</feature>
<feature type="binding site" evidence="1">
    <location>
        <position position="134"/>
    </location>
    <ligand>
        <name>substrate</name>
    </ligand>
</feature>
<feature type="binding site" evidence="1">
    <location>
        <position position="219"/>
    </location>
    <ligand>
        <name>Mg(2+)</name>
        <dbReference type="ChEBI" id="CHEBI:18420"/>
    </ligand>
</feature>
<feature type="binding site" evidence="1">
    <location>
        <position position="219"/>
    </location>
    <ligand>
        <name>substrate</name>
    </ligand>
</feature>
<feature type="binding site" evidence="1">
    <location>
        <position position="243"/>
    </location>
    <ligand>
        <name>Mg(2+)</name>
        <dbReference type="ChEBI" id="CHEBI:18420"/>
    </ligand>
</feature>
<feature type="binding site" evidence="1">
    <location>
        <position position="247"/>
    </location>
    <ligand>
        <name>Mg(2+)</name>
        <dbReference type="ChEBI" id="CHEBI:18420"/>
    </ligand>
</feature>
<feature type="binding site" evidence="1">
    <location>
        <begin position="277"/>
        <end position="289"/>
    </location>
    <ligand>
        <name>NAD(+)</name>
        <dbReference type="ChEBI" id="CHEBI:57540"/>
    </ligand>
</feature>
<feature type="site" description="Important for catalysis" evidence="1">
    <location>
        <position position="141"/>
    </location>
</feature>
<feature type="site" description="Important for catalysis" evidence="1">
    <location>
        <position position="187"/>
    </location>
</feature>
<sequence length="366" mass="39544">MEKHIILLPGDGIGREIIDSAKQVLTAIASEYNHRFTFEEHAIGGSAIDEYGTPLPDKTVDACSKADAILLGAVGGPKWDANPSHLRPEKGLLGIRKQLGLFANLRPVKTISSLLYASPLKEEIVSQADMLIIRELTGGIYFGTPSERTTNGVVDTLQYSREEIERIVERGFEAARIRKKHLTSVDKANVLESSKLWREIVEEKSKDYPDVAVNHLLVDAAAMKLVTQPSFFDVIVTENLFGDILSDEASVLTGSLGMLPSASLRADGLGLYEPVHGSAPDIAGKGIANPLAMILSAALMLEHSFGLVDEAKEIERAVNDCLLQGFHTADIHIPGGVQVGTKQMTDAVLENVTTKSISDSICSSYV</sequence>
<evidence type="ECO:0000255" key="1">
    <source>
        <dbReference type="HAMAP-Rule" id="MF_01033"/>
    </source>
</evidence>
<dbReference type="EC" id="1.1.1.85" evidence="1"/>
<dbReference type="EMBL" id="BA000028">
    <property type="protein sequence ID" value="BAC14575.1"/>
    <property type="molecule type" value="Genomic_DNA"/>
</dbReference>
<dbReference type="RefSeq" id="WP_011067012.1">
    <property type="nucleotide sequence ID" value="NC_004193.1"/>
</dbReference>
<dbReference type="SMR" id="Q8EN68"/>
<dbReference type="STRING" id="221109.gene:10734871"/>
<dbReference type="KEGG" id="oih:OB2619"/>
<dbReference type="eggNOG" id="COG0473">
    <property type="taxonomic scope" value="Bacteria"/>
</dbReference>
<dbReference type="HOGENOM" id="CLU_031953_0_3_9"/>
<dbReference type="OrthoDB" id="9806254at2"/>
<dbReference type="PhylomeDB" id="Q8EN68"/>
<dbReference type="UniPathway" id="UPA00048">
    <property type="reaction ID" value="UER00072"/>
</dbReference>
<dbReference type="Proteomes" id="UP000000822">
    <property type="component" value="Chromosome"/>
</dbReference>
<dbReference type="GO" id="GO:0005829">
    <property type="term" value="C:cytosol"/>
    <property type="evidence" value="ECO:0007669"/>
    <property type="project" value="TreeGrafter"/>
</dbReference>
<dbReference type="GO" id="GO:0003862">
    <property type="term" value="F:3-isopropylmalate dehydrogenase activity"/>
    <property type="evidence" value="ECO:0007669"/>
    <property type="project" value="UniProtKB-UniRule"/>
</dbReference>
<dbReference type="GO" id="GO:0000287">
    <property type="term" value="F:magnesium ion binding"/>
    <property type="evidence" value="ECO:0007669"/>
    <property type="project" value="InterPro"/>
</dbReference>
<dbReference type="GO" id="GO:0051287">
    <property type="term" value="F:NAD binding"/>
    <property type="evidence" value="ECO:0007669"/>
    <property type="project" value="InterPro"/>
</dbReference>
<dbReference type="GO" id="GO:0009098">
    <property type="term" value="P:L-leucine biosynthetic process"/>
    <property type="evidence" value="ECO:0007669"/>
    <property type="project" value="UniProtKB-UniRule"/>
</dbReference>
<dbReference type="FunFam" id="3.40.718.10:FF:000028">
    <property type="entry name" value="3-isopropylmalate dehydrogenase"/>
    <property type="match status" value="1"/>
</dbReference>
<dbReference type="Gene3D" id="3.40.718.10">
    <property type="entry name" value="Isopropylmalate Dehydrogenase"/>
    <property type="match status" value="1"/>
</dbReference>
<dbReference type="HAMAP" id="MF_01033">
    <property type="entry name" value="LeuB_type1"/>
    <property type="match status" value="1"/>
</dbReference>
<dbReference type="InterPro" id="IPR019818">
    <property type="entry name" value="IsoCit/isopropylmalate_DH_CS"/>
</dbReference>
<dbReference type="InterPro" id="IPR024084">
    <property type="entry name" value="IsoPropMal-DH-like_dom"/>
</dbReference>
<dbReference type="InterPro" id="IPR004429">
    <property type="entry name" value="Isopropylmalate_DH"/>
</dbReference>
<dbReference type="NCBIfam" id="TIGR00169">
    <property type="entry name" value="leuB"/>
    <property type="match status" value="1"/>
</dbReference>
<dbReference type="PANTHER" id="PTHR42979">
    <property type="entry name" value="3-ISOPROPYLMALATE DEHYDROGENASE"/>
    <property type="match status" value="1"/>
</dbReference>
<dbReference type="PANTHER" id="PTHR42979:SF1">
    <property type="entry name" value="3-ISOPROPYLMALATE DEHYDROGENASE"/>
    <property type="match status" value="1"/>
</dbReference>
<dbReference type="Pfam" id="PF00180">
    <property type="entry name" value="Iso_dh"/>
    <property type="match status" value="1"/>
</dbReference>
<dbReference type="SMART" id="SM01329">
    <property type="entry name" value="Iso_dh"/>
    <property type="match status" value="1"/>
</dbReference>
<dbReference type="SUPFAM" id="SSF53659">
    <property type="entry name" value="Isocitrate/Isopropylmalate dehydrogenase-like"/>
    <property type="match status" value="1"/>
</dbReference>
<dbReference type="PROSITE" id="PS00470">
    <property type="entry name" value="IDH_IMDH"/>
    <property type="match status" value="1"/>
</dbReference>
<keyword id="KW-0028">Amino-acid biosynthesis</keyword>
<keyword id="KW-0100">Branched-chain amino acid biosynthesis</keyword>
<keyword id="KW-0963">Cytoplasm</keyword>
<keyword id="KW-0432">Leucine biosynthesis</keyword>
<keyword id="KW-0460">Magnesium</keyword>
<keyword id="KW-0464">Manganese</keyword>
<keyword id="KW-0479">Metal-binding</keyword>
<keyword id="KW-0520">NAD</keyword>
<keyword id="KW-0560">Oxidoreductase</keyword>
<keyword id="KW-1185">Reference proteome</keyword>
<organism>
    <name type="scientific">Oceanobacillus iheyensis (strain DSM 14371 / CIP 107618 / JCM 11309 / KCTC 3954 / HTE831)</name>
    <dbReference type="NCBI Taxonomy" id="221109"/>
    <lineage>
        <taxon>Bacteria</taxon>
        <taxon>Bacillati</taxon>
        <taxon>Bacillota</taxon>
        <taxon>Bacilli</taxon>
        <taxon>Bacillales</taxon>
        <taxon>Bacillaceae</taxon>
        <taxon>Oceanobacillus</taxon>
    </lineage>
</organism>
<gene>
    <name evidence="1" type="primary">leuB</name>
    <name type="ordered locus">OB2619</name>
</gene>